<proteinExistence type="evidence at transcript level"/>
<reference key="1">
    <citation type="journal article" date="1993" name="Curr. Genet.">
        <title>Characterization of the radish mitochondrial orfB locus: possible relationship with male sterility in Ogura radish.</title>
        <authorList>
            <person name="Krishnasamy S."/>
            <person name="Makaroff C.A."/>
        </authorList>
    </citation>
    <scope>NUCLEOTIDE SEQUENCE [GENOMIC DNA]</scope>
    <source>
        <strain>cv. Scarlet Knight</strain>
        <tissue>Leaf</tissue>
    </source>
</reference>
<reference key="2">
    <citation type="journal article" date="1994" name="Plant Mol. Biol.">
        <title>Organ-specific reduction in the abundance of a mitochondrial protein accompanies fertility restoration in cytoplasmic male-sterile radish.</title>
        <authorList>
            <person name="Krishnasamy S."/>
            <person name="Makaroff C.A."/>
        </authorList>
    </citation>
    <scope>FUNCTION</scope>
    <scope>TISSUE SPECIFICITY</scope>
    <scope>SUBCELLULAR LOCATION</scope>
</reference>
<protein>
    <recommendedName>
        <fullName>Uncharacterized mitochondrial protein ORF138</fullName>
    </recommendedName>
</protein>
<dbReference type="EMBL" id="Z18896">
    <property type="protein sequence ID" value="CAA79332.1"/>
    <property type="molecule type" value="Genomic_DNA"/>
</dbReference>
<dbReference type="PIR" id="S30092">
    <property type="entry name" value="S30092"/>
</dbReference>
<dbReference type="SMR" id="P68514"/>
<dbReference type="Proteomes" id="UP000504610">
    <property type="component" value="Unplaced"/>
</dbReference>
<dbReference type="GO" id="GO:0031966">
    <property type="term" value="C:mitochondrial membrane"/>
    <property type="evidence" value="ECO:0007669"/>
    <property type="project" value="UniProtKB-SubCell"/>
</dbReference>
<dbReference type="InterPro" id="IPR008527">
    <property type="entry name" value="DUF809"/>
</dbReference>
<dbReference type="Pfam" id="PF05663">
    <property type="entry name" value="DUF809"/>
    <property type="match status" value="1"/>
</dbReference>
<organism>
    <name type="scientific">Raphanus sativus</name>
    <name type="common">Radish</name>
    <name type="synonym">Raphanus raphanistrum var. sativus</name>
    <dbReference type="NCBI Taxonomy" id="3726"/>
    <lineage>
        <taxon>Eukaryota</taxon>
        <taxon>Viridiplantae</taxon>
        <taxon>Streptophyta</taxon>
        <taxon>Embryophyta</taxon>
        <taxon>Tracheophyta</taxon>
        <taxon>Spermatophyta</taxon>
        <taxon>Magnoliopsida</taxon>
        <taxon>eudicotyledons</taxon>
        <taxon>Gunneridae</taxon>
        <taxon>Pentapetalae</taxon>
        <taxon>rosids</taxon>
        <taxon>malvids</taxon>
        <taxon>Brassicales</taxon>
        <taxon>Brassicaceae</taxon>
        <taxon>Brassiceae</taxon>
        <taxon>Raphanus</taxon>
    </lineage>
</organism>
<feature type="chain" id="PRO_0000196900" description="Uncharacterized mitochondrial protein ORF138">
    <location>
        <begin position="1"/>
        <end position="138"/>
    </location>
</feature>
<feature type="transmembrane region" description="Helical" evidence="1">
    <location>
        <begin position="19"/>
        <end position="40"/>
    </location>
</feature>
<feature type="repeat" description="1">
    <location>
        <begin position="94"/>
        <end position="106"/>
    </location>
</feature>
<feature type="repeat" description="2">
    <location>
        <begin position="107"/>
        <end position="119"/>
    </location>
</feature>
<feature type="repeat" description="3">
    <location>
        <begin position="120"/>
        <end position="132"/>
    </location>
</feature>
<feature type="region of interest" description="3 X 13 AA tandem repeats of K-G-E-I-E-G-K-E-E-K-K-E-[GV]">
    <location>
        <begin position="94"/>
        <end position="132"/>
    </location>
</feature>
<feature type="region of interest" description="Disordered" evidence="2">
    <location>
        <begin position="98"/>
        <end position="138"/>
    </location>
</feature>
<evidence type="ECO:0000255" key="1"/>
<evidence type="ECO:0000256" key="2">
    <source>
        <dbReference type="SAM" id="MobiDB-lite"/>
    </source>
</evidence>
<evidence type="ECO:0000269" key="3">
    <source>
    </source>
</evidence>
<name>YMX1_RAPSA</name>
<sequence length="138" mass="16016">MITFFEKLSTFCHNLTPTECKVSVISFFLLAFLLMAHIWLSWFSNNQHCLRTMRHLEKLKIPYEFQYGWLGVKITIKSNVPNDEVTKKVSPIIKGEIEGKEEKKEGKGEIEGKEEKKEGKGEIEGKEEKKEVENGPRK</sequence>
<keyword id="KW-0472">Membrane</keyword>
<keyword id="KW-0496">Mitochondrion</keyword>
<keyword id="KW-1185">Reference proteome</keyword>
<keyword id="KW-0677">Repeat</keyword>
<keyword id="KW-0812">Transmembrane</keyword>
<keyword id="KW-1133">Transmembrane helix</keyword>
<comment type="function">
    <text evidence="3">Involved in cytoplasmic male sterility (CMS) by leading to pollen abortion. Not expressed in fertile (normal) plants.</text>
</comment>
<comment type="subcellular location">
    <subcellularLocation>
        <location evidence="3">Mitochondrion membrane</location>
        <topology evidence="3">Single-pass membrane protein</topology>
    </subcellularLocation>
</comment>
<comment type="tissue specificity">
    <text evidence="3">Expressed in roots, leaves and flowers.</text>
</comment>
<comment type="miscellaneous">
    <text>Nuclear restoration is accompanied by a dramatic reduction in the amount of this protein in mitochondria of flowers and leaves, but not roots of fertility-restored plants. The restorer genes are affecting either the translation or the stability of the protein.</text>
</comment>
<geneLocation type="mitochondrion"/>
<accession>P68514</accession>
<accession>Q03150</accession>